<reference key="1">
    <citation type="journal article" date="1988" name="J. Bacteriol.">
        <title>Translational attenuation control of ermSF, an inducible resistance determinant encoding rRNA N-methyltransferase from Streptomyces fradiae.</title>
        <authorList>
            <person name="Kamimiya S."/>
            <person name="Weisblum B."/>
        </authorList>
    </citation>
    <scope>NUCLEOTIDE SEQUENCE [GENOMIC DNA]</scope>
</reference>
<proteinExistence type="predicted"/>
<accession>P45440</accession>
<dbReference type="EMBL" id="M19269">
    <property type="protein sequence ID" value="AAA26741.1"/>
    <property type="molecule type" value="Genomic_DNA"/>
</dbReference>
<dbReference type="GO" id="GO:0046677">
    <property type="term" value="P:response to antibiotic"/>
    <property type="evidence" value="ECO:0007669"/>
    <property type="project" value="UniProtKB-KW"/>
</dbReference>
<keyword id="KW-0046">Antibiotic resistance</keyword>
<keyword id="KW-0428">Leader peptide</keyword>
<feature type="peptide" id="PRO_0000043978" description="Erythromycin resistance leader peptide">
    <location>
        <begin position="1"/>
        <end position="24"/>
    </location>
</feature>
<feature type="region of interest" description="Disordered" evidence="1">
    <location>
        <begin position="1"/>
        <end position="24"/>
    </location>
</feature>
<feature type="compositionally biased region" description="Low complexity" evidence="1">
    <location>
        <begin position="1"/>
        <end position="14"/>
    </location>
</feature>
<feature type="compositionally biased region" description="Pro residues" evidence="1">
    <location>
        <begin position="15"/>
        <end position="24"/>
    </location>
</feature>
<evidence type="ECO:0000256" key="1">
    <source>
        <dbReference type="SAM" id="MobiDB-lite"/>
    </source>
</evidence>
<evidence type="ECO:0000305" key="2"/>
<name>LPER_STRFR</name>
<comment type="function">
    <text>This peptide is involved in the control mechanism of the synthesis of the macrolide-lincosamide-streptogramin B resistance protein.</text>
</comment>
<comment type="caution">
    <text evidence="2">It is uncertain whether Met-1 or Met-3 is the initiator.</text>
</comment>
<organism>
    <name type="scientific">Streptomyces fradiae</name>
    <name type="common">Streptomyces roseoflavus</name>
    <dbReference type="NCBI Taxonomy" id="1906"/>
    <lineage>
        <taxon>Bacteria</taxon>
        <taxon>Bacillati</taxon>
        <taxon>Actinomycetota</taxon>
        <taxon>Actinomycetes</taxon>
        <taxon>Kitasatosporales</taxon>
        <taxon>Streptomycetaceae</taxon>
        <taxon>Streptomyces</taxon>
    </lineage>
</organism>
<protein>
    <recommendedName>
        <fullName>Erythromycin resistance leader peptide</fullName>
    </recommendedName>
    <alternativeName>
        <fullName>23S rRNA methylase leader peptide</fullName>
    </alternativeName>
</protein>
<sequence>MSMGIAARPPRAALLPPPSVPRSR</sequence>